<accession>B3E5M9</accession>
<feature type="chain" id="PRO_1000148126" description="Bifunctional protein HldE">
    <location>
        <begin position="1"/>
        <end position="491"/>
    </location>
</feature>
<feature type="region of interest" description="Ribokinase">
    <location>
        <begin position="1"/>
        <end position="330"/>
    </location>
</feature>
<feature type="region of interest" description="Cytidylyltransferase">
    <location>
        <begin position="356"/>
        <end position="491"/>
    </location>
</feature>
<feature type="active site" evidence="1">
    <location>
        <position position="275"/>
    </location>
</feature>
<feature type="binding site" evidence="1">
    <location>
        <begin position="205"/>
        <end position="208"/>
    </location>
    <ligand>
        <name>ATP</name>
        <dbReference type="ChEBI" id="CHEBI:30616"/>
    </ligand>
</feature>
<evidence type="ECO:0000255" key="1">
    <source>
        <dbReference type="HAMAP-Rule" id="MF_01603"/>
    </source>
</evidence>
<reference key="1">
    <citation type="submission" date="2008-05" db="EMBL/GenBank/DDBJ databases">
        <title>Complete sequence of chromosome of Geobacter lovleyi SZ.</title>
        <authorList>
            <consortium name="US DOE Joint Genome Institute"/>
            <person name="Lucas S."/>
            <person name="Copeland A."/>
            <person name="Lapidus A."/>
            <person name="Glavina del Rio T."/>
            <person name="Dalin E."/>
            <person name="Tice H."/>
            <person name="Bruce D."/>
            <person name="Goodwin L."/>
            <person name="Pitluck S."/>
            <person name="Chertkov O."/>
            <person name="Meincke L."/>
            <person name="Brettin T."/>
            <person name="Detter J.C."/>
            <person name="Han C."/>
            <person name="Tapia R."/>
            <person name="Kuske C.R."/>
            <person name="Schmutz J."/>
            <person name="Larimer F."/>
            <person name="Land M."/>
            <person name="Hauser L."/>
            <person name="Kyrpides N."/>
            <person name="Mikhailova N."/>
            <person name="Sung Y."/>
            <person name="Fletcher K.E."/>
            <person name="Ritalahti K.M."/>
            <person name="Loeffler F.E."/>
            <person name="Richardson P."/>
        </authorList>
    </citation>
    <scope>NUCLEOTIDE SEQUENCE [LARGE SCALE GENOMIC DNA]</scope>
    <source>
        <strain>ATCC BAA-1151 / DSM 17278 / SZ</strain>
    </source>
</reference>
<organism>
    <name type="scientific">Trichlorobacter lovleyi (strain ATCC BAA-1151 / DSM 17278 / SZ)</name>
    <name type="common">Geobacter lovleyi</name>
    <dbReference type="NCBI Taxonomy" id="398767"/>
    <lineage>
        <taxon>Bacteria</taxon>
        <taxon>Pseudomonadati</taxon>
        <taxon>Thermodesulfobacteriota</taxon>
        <taxon>Desulfuromonadia</taxon>
        <taxon>Geobacterales</taxon>
        <taxon>Geobacteraceae</taxon>
        <taxon>Trichlorobacter</taxon>
    </lineage>
</organism>
<name>HLDE_TRIL1</name>
<comment type="function">
    <text evidence="1">Catalyzes the phosphorylation of D-glycero-D-manno-heptose 7-phosphate at the C-1 position to selectively form D-glycero-beta-D-manno-heptose-1,7-bisphosphate.</text>
</comment>
<comment type="function">
    <text evidence="1">Catalyzes the ADP transfer from ATP to D-glycero-beta-D-manno-heptose 1-phosphate, yielding ADP-D-glycero-beta-D-manno-heptose.</text>
</comment>
<comment type="catalytic activity">
    <reaction evidence="1">
        <text>D-glycero-beta-D-manno-heptose 7-phosphate + ATP = D-glycero-beta-D-manno-heptose 1,7-bisphosphate + ADP + H(+)</text>
        <dbReference type="Rhea" id="RHEA:27473"/>
        <dbReference type="ChEBI" id="CHEBI:15378"/>
        <dbReference type="ChEBI" id="CHEBI:30616"/>
        <dbReference type="ChEBI" id="CHEBI:60204"/>
        <dbReference type="ChEBI" id="CHEBI:60208"/>
        <dbReference type="ChEBI" id="CHEBI:456216"/>
        <dbReference type="EC" id="2.7.1.167"/>
    </reaction>
</comment>
<comment type="catalytic activity">
    <reaction evidence="1">
        <text>D-glycero-beta-D-manno-heptose 1-phosphate + ATP + H(+) = ADP-D-glycero-beta-D-manno-heptose + diphosphate</text>
        <dbReference type="Rhea" id="RHEA:27465"/>
        <dbReference type="ChEBI" id="CHEBI:15378"/>
        <dbReference type="ChEBI" id="CHEBI:30616"/>
        <dbReference type="ChEBI" id="CHEBI:33019"/>
        <dbReference type="ChEBI" id="CHEBI:59967"/>
        <dbReference type="ChEBI" id="CHEBI:61593"/>
        <dbReference type="EC" id="2.7.7.70"/>
    </reaction>
</comment>
<comment type="pathway">
    <text evidence="1">Nucleotide-sugar biosynthesis; ADP-L-glycero-beta-D-manno-heptose biosynthesis; ADP-L-glycero-beta-D-manno-heptose from D-glycero-beta-D-manno-heptose 7-phosphate: step 1/4.</text>
</comment>
<comment type="pathway">
    <text evidence="1">Nucleotide-sugar biosynthesis; ADP-L-glycero-beta-D-manno-heptose biosynthesis; ADP-L-glycero-beta-D-manno-heptose from D-glycero-beta-D-manno-heptose 7-phosphate: step 3/4.</text>
</comment>
<comment type="subunit">
    <text evidence="1">Homodimer.</text>
</comment>
<comment type="similarity">
    <text evidence="1">In the N-terminal section; belongs to the carbohydrate kinase PfkB family.</text>
</comment>
<comment type="similarity">
    <text evidence="1">In the C-terminal section; belongs to the cytidylyltransferase family.</text>
</comment>
<proteinExistence type="inferred from homology"/>
<keyword id="KW-0067">ATP-binding</keyword>
<keyword id="KW-0119">Carbohydrate metabolism</keyword>
<keyword id="KW-0418">Kinase</keyword>
<keyword id="KW-0511">Multifunctional enzyme</keyword>
<keyword id="KW-0547">Nucleotide-binding</keyword>
<keyword id="KW-0548">Nucleotidyltransferase</keyword>
<keyword id="KW-1185">Reference proteome</keyword>
<keyword id="KW-0808">Transferase</keyword>
<dbReference type="EC" id="2.7.1.167" evidence="1"/>
<dbReference type="EC" id="2.7.7.70" evidence="1"/>
<dbReference type="EMBL" id="CP001089">
    <property type="protein sequence ID" value="ACD94700.1"/>
    <property type="molecule type" value="Genomic_DNA"/>
</dbReference>
<dbReference type="RefSeq" id="WP_012469050.1">
    <property type="nucleotide sequence ID" value="NC_010814.1"/>
</dbReference>
<dbReference type="SMR" id="B3E5M9"/>
<dbReference type="STRING" id="398767.Glov_0977"/>
<dbReference type="KEGG" id="glo:Glov_0977"/>
<dbReference type="eggNOG" id="COG0615">
    <property type="taxonomic scope" value="Bacteria"/>
</dbReference>
<dbReference type="eggNOG" id="COG2870">
    <property type="taxonomic scope" value="Bacteria"/>
</dbReference>
<dbReference type="HOGENOM" id="CLU_021150_2_1_7"/>
<dbReference type="OrthoDB" id="9802794at2"/>
<dbReference type="UniPathway" id="UPA00356">
    <property type="reaction ID" value="UER00437"/>
</dbReference>
<dbReference type="UniPathway" id="UPA00356">
    <property type="reaction ID" value="UER00439"/>
</dbReference>
<dbReference type="Proteomes" id="UP000002420">
    <property type="component" value="Chromosome"/>
</dbReference>
<dbReference type="GO" id="GO:0005829">
    <property type="term" value="C:cytosol"/>
    <property type="evidence" value="ECO:0007669"/>
    <property type="project" value="TreeGrafter"/>
</dbReference>
<dbReference type="GO" id="GO:0005524">
    <property type="term" value="F:ATP binding"/>
    <property type="evidence" value="ECO:0007669"/>
    <property type="project" value="UniProtKB-UniRule"/>
</dbReference>
<dbReference type="GO" id="GO:0033785">
    <property type="term" value="F:heptose 7-phosphate kinase activity"/>
    <property type="evidence" value="ECO:0007669"/>
    <property type="project" value="UniProtKB-UniRule"/>
</dbReference>
<dbReference type="GO" id="GO:0033786">
    <property type="term" value="F:heptose-1-phosphate adenylyltransferase activity"/>
    <property type="evidence" value="ECO:0007669"/>
    <property type="project" value="UniProtKB-UniRule"/>
</dbReference>
<dbReference type="GO" id="GO:0016773">
    <property type="term" value="F:phosphotransferase activity, alcohol group as acceptor"/>
    <property type="evidence" value="ECO:0007669"/>
    <property type="project" value="InterPro"/>
</dbReference>
<dbReference type="GO" id="GO:0097171">
    <property type="term" value="P:ADP-L-glycero-beta-D-manno-heptose biosynthetic process"/>
    <property type="evidence" value="ECO:0007669"/>
    <property type="project" value="UniProtKB-UniPathway"/>
</dbReference>
<dbReference type="CDD" id="cd01172">
    <property type="entry name" value="RfaE_like"/>
    <property type="match status" value="1"/>
</dbReference>
<dbReference type="FunFam" id="3.40.1190.20:FF:000002">
    <property type="entry name" value="Bifunctional protein HldE"/>
    <property type="match status" value="1"/>
</dbReference>
<dbReference type="Gene3D" id="3.40.1190.20">
    <property type="match status" value="1"/>
</dbReference>
<dbReference type="Gene3D" id="3.40.50.620">
    <property type="entry name" value="HUPs"/>
    <property type="match status" value="1"/>
</dbReference>
<dbReference type="HAMAP" id="MF_01603">
    <property type="entry name" value="HldE"/>
    <property type="match status" value="1"/>
</dbReference>
<dbReference type="InterPro" id="IPR023030">
    <property type="entry name" value="Bifunc_HldE"/>
</dbReference>
<dbReference type="InterPro" id="IPR002173">
    <property type="entry name" value="Carboh/pur_kinase_PfkB_CS"/>
</dbReference>
<dbReference type="InterPro" id="IPR004821">
    <property type="entry name" value="Cyt_trans-like"/>
</dbReference>
<dbReference type="InterPro" id="IPR011611">
    <property type="entry name" value="PfkB_dom"/>
</dbReference>
<dbReference type="InterPro" id="IPR011913">
    <property type="entry name" value="RfaE_dom_I"/>
</dbReference>
<dbReference type="InterPro" id="IPR011914">
    <property type="entry name" value="RfaE_dom_II"/>
</dbReference>
<dbReference type="InterPro" id="IPR029056">
    <property type="entry name" value="Ribokinase-like"/>
</dbReference>
<dbReference type="InterPro" id="IPR014729">
    <property type="entry name" value="Rossmann-like_a/b/a_fold"/>
</dbReference>
<dbReference type="NCBIfam" id="TIGR00125">
    <property type="entry name" value="cyt_tran_rel"/>
    <property type="match status" value="1"/>
</dbReference>
<dbReference type="NCBIfam" id="NF008454">
    <property type="entry name" value="PRK11316.1"/>
    <property type="match status" value="1"/>
</dbReference>
<dbReference type="NCBIfam" id="TIGR02198">
    <property type="entry name" value="rfaE_dom_I"/>
    <property type="match status" value="1"/>
</dbReference>
<dbReference type="NCBIfam" id="TIGR02199">
    <property type="entry name" value="rfaE_dom_II"/>
    <property type="match status" value="1"/>
</dbReference>
<dbReference type="PANTHER" id="PTHR46969">
    <property type="entry name" value="BIFUNCTIONAL PROTEIN HLDE"/>
    <property type="match status" value="1"/>
</dbReference>
<dbReference type="PANTHER" id="PTHR46969:SF1">
    <property type="entry name" value="BIFUNCTIONAL PROTEIN HLDE"/>
    <property type="match status" value="1"/>
</dbReference>
<dbReference type="Pfam" id="PF01467">
    <property type="entry name" value="CTP_transf_like"/>
    <property type="match status" value="1"/>
</dbReference>
<dbReference type="Pfam" id="PF00294">
    <property type="entry name" value="PfkB"/>
    <property type="match status" value="1"/>
</dbReference>
<dbReference type="SUPFAM" id="SSF52374">
    <property type="entry name" value="Nucleotidylyl transferase"/>
    <property type="match status" value="1"/>
</dbReference>
<dbReference type="SUPFAM" id="SSF53613">
    <property type="entry name" value="Ribokinase-like"/>
    <property type="match status" value="1"/>
</dbReference>
<dbReference type="PROSITE" id="PS00583">
    <property type="entry name" value="PFKB_KINASES_1"/>
    <property type="match status" value="1"/>
</dbReference>
<protein>
    <recommendedName>
        <fullName evidence="1">Bifunctional protein HldE</fullName>
    </recommendedName>
    <domain>
        <recommendedName>
            <fullName evidence="1">D-beta-D-heptose 7-phosphate kinase</fullName>
            <ecNumber evidence="1">2.7.1.167</ecNumber>
        </recommendedName>
        <alternativeName>
            <fullName evidence="1">D-beta-D-heptose 7-phosphotransferase</fullName>
        </alternativeName>
        <alternativeName>
            <fullName evidence="1">D-glycero-beta-D-manno-heptose-7-phosphate kinase</fullName>
        </alternativeName>
    </domain>
    <domain>
        <recommendedName>
            <fullName evidence="1">D-beta-D-heptose 1-phosphate adenylyltransferase</fullName>
            <ecNumber evidence="1">2.7.7.70</ecNumber>
        </recommendedName>
        <alternativeName>
            <fullName evidence="1">D-glycero-beta-D-manno-heptose 1-phosphate adenylyltransferase</fullName>
        </alternativeName>
    </domain>
</protein>
<gene>
    <name evidence="1" type="primary">hldE</name>
    <name type="ordered locus">Glov_0977</name>
</gene>
<sequence length="491" mass="53022">MDRKMVESLFQRASTLKCLVVGDLMLDEYLWGRTDRISPEAPVQVVDVLREDLRLGGAGNVANNLLALGCQVTVASVIGEDENGWALLKAFSRQGVDTAPIYQEPGRRTGRKTRVIAANQQIVRIDRESREPLSGQIEQQLINWLQQHITGFDVVLVSDYLKGVLTPSVLASVTSTASRRNIPVLVDPKGSDYSKYRGATCLTPNRKEAEAASGVPIQDGASLQQAADTIMSTVGLDNLLITRSEEGMSLFCGNGETVHIPTVAREVFDVTGAGDTVLALLACGLAGGLPLAESARLANVAAGIAVAKLGTSTVTPAEIIAAVSLEHRDSDSKIKNREVLSEIIAAERAKGRQVVFTNGCFDLLHAGHVKYLQAARRLGDLLILGLNSDASVRRLKGPKRPLIDEDERGHLMAALDCIDYVCLFEEDTPLELITALKPQILVKGGDYTPEGVVGKDLVESYGGRVELIPFVDGKSTTNIIEKVLERYTDEQ</sequence>